<evidence type="ECO:0000255" key="1"/>
<evidence type="ECO:0000255" key="2">
    <source>
        <dbReference type="PROSITE-ProRule" id="PRU00285"/>
    </source>
</evidence>
<evidence type="ECO:0000256" key="3">
    <source>
        <dbReference type="SAM" id="MobiDB-lite"/>
    </source>
</evidence>
<evidence type="ECO:0000305" key="4"/>
<keyword id="KW-0496">Mitochondrion</keyword>
<keyword id="KW-1185">Reference proteome</keyword>
<keyword id="KW-0346">Stress response</keyword>
<keyword id="KW-0809">Transit peptide</keyword>
<proteinExistence type="evidence at transcript level"/>
<gene>
    <name type="primary">HSP23.6</name>
    <name type="ordered locus">At4g25200</name>
    <name type="ORF">F24A6.40</name>
</gene>
<dbReference type="EMBL" id="U72958">
    <property type="protein sequence ID" value="AAB38795.1"/>
    <property type="molecule type" value="mRNA"/>
</dbReference>
<dbReference type="EMBL" id="X98375">
    <property type="protein sequence ID" value="CAA67022.1"/>
    <property type="molecule type" value="Genomic_DNA"/>
</dbReference>
<dbReference type="EMBL" id="Y11864">
    <property type="protein sequence ID" value="CAA72613.1"/>
    <property type="molecule type" value="mRNA"/>
</dbReference>
<dbReference type="EMBL" id="AL035396">
    <property type="protein sequence ID" value="CAA23061.1"/>
    <property type="molecule type" value="Genomic_DNA"/>
</dbReference>
<dbReference type="EMBL" id="AL161562">
    <property type="protein sequence ID" value="CAB79429.1"/>
    <property type="molecule type" value="Genomic_DNA"/>
</dbReference>
<dbReference type="EMBL" id="CP002687">
    <property type="protein sequence ID" value="AEE85024.1"/>
    <property type="molecule type" value="Genomic_DNA"/>
</dbReference>
<dbReference type="EMBL" id="AK119118">
    <property type="protein sequence ID" value="BAC43689.1"/>
    <property type="molecule type" value="mRNA"/>
</dbReference>
<dbReference type="EMBL" id="BT005229">
    <property type="protein sequence ID" value="AAO63293.1"/>
    <property type="molecule type" value="mRNA"/>
</dbReference>
<dbReference type="EMBL" id="AK317291">
    <property type="protein sequence ID" value="BAH19967.1"/>
    <property type="molecule type" value="mRNA"/>
</dbReference>
<dbReference type="PIR" id="T05541">
    <property type="entry name" value="T05541"/>
</dbReference>
<dbReference type="RefSeq" id="NP_194250.1">
    <property type="nucleotide sequence ID" value="NM_118652.3"/>
</dbReference>
<dbReference type="SMR" id="Q96331"/>
<dbReference type="BioGRID" id="13910">
    <property type="interactions" value="88"/>
</dbReference>
<dbReference type="FunCoup" id="Q96331">
    <property type="interactions" value="64"/>
</dbReference>
<dbReference type="IntAct" id="Q96331">
    <property type="interactions" value="90"/>
</dbReference>
<dbReference type="STRING" id="3702.Q96331"/>
<dbReference type="PaxDb" id="3702-AT4G25200.1"/>
<dbReference type="ProteomicsDB" id="230143"/>
<dbReference type="EnsemblPlants" id="AT4G25200.1">
    <property type="protein sequence ID" value="AT4G25200.1"/>
    <property type="gene ID" value="AT4G25200"/>
</dbReference>
<dbReference type="GeneID" id="828623"/>
<dbReference type="Gramene" id="AT4G25200.1">
    <property type="protein sequence ID" value="AT4G25200.1"/>
    <property type="gene ID" value="AT4G25200"/>
</dbReference>
<dbReference type="KEGG" id="ath:AT4G25200"/>
<dbReference type="Araport" id="AT4G25200"/>
<dbReference type="TAIR" id="AT4G25200">
    <property type="gene designation" value="HSP23.6-MITO"/>
</dbReference>
<dbReference type="eggNOG" id="KOG0710">
    <property type="taxonomic scope" value="Eukaryota"/>
</dbReference>
<dbReference type="HOGENOM" id="CLU_046737_3_1_1"/>
<dbReference type="InParanoid" id="Q96331"/>
<dbReference type="OMA" id="WDANENE"/>
<dbReference type="OrthoDB" id="1431247at2759"/>
<dbReference type="PhylomeDB" id="Q96331"/>
<dbReference type="PRO" id="PR:Q96331"/>
<dbReference type="Proteomes" id="UP000006548">
    <property type="component" value="Chromosome 4"/>
</dbReference>
<dbReference type="ExpressionAtlas" id="Q96331">
    <property type="expression patterns" value="baseline and differential"/>
</dbReference>
<dbReference type="GO" id="GO:0005739">
    <property type="term" value="C:mitochondrion"/>
    <property type="evidence" value="ECO:0007669"/>
    <property type="project" value="UniProtKB-SubCell"/>
</dbReference>
<dbReference type="CDD" id="cd06464">
    <property type="entry name" value="ACD_sHsps-like"/>
    <property type="match status" value="1"/>
</dbReference>
<dbReference type="FunFam" id="2.60.40.790:FF:000047">
    <property type="entry name" value="23.6 kDa heat shock protein mitochondrial"/>
    <property type="match status" value="1"/>
</dbReference>
<dbReference type="Gene3D" id="2.60.40.790">
    <property type="match status" value="1"/>
</dbReference>
<dbReference type="InterPro" id="IPR002068">
    <property type="entry name" value="A-crystallin/Hsp20_dom"/>
</dbReference>
<dbReference type="InterPro" id="IPR044656">
    <property type="entry name" value="HSP14.7/HSP23.5/HSP23.6-like"/>
</dbReference>
<dbReference type="InterPro" id="IPR008978">
    <property type="entry name" value="HSP20-like_chaperone"/>
</dbReference>
<dbReference type="PANTHER" id="PTHR46991">
    <property type="entry name" value="23.5 KDA HEAT SHOCK PROTEIN, MITOCHONDRIAL"/>
    <property type="match status" value="1"/>
</dbReference>
<dbReference type="PANTHER" id="PTHR46991:SF11">
    <property type="entry name" value="SMALL HEAT SHOCK PROTEIN HSPF"/>
    <property type="match status" value="1"/>
</dbReference>
<dbReference type="Pfam" id="PF00011">
    <property type="entry name" value="HSP20"/>
    <property type="match status" value="1"/>
</dbReference>
<dbReference type="SUPFAM" id="SSF49764">
    <property type="entry name" value="HSP20-like chaperones"/>
    <property type="match status" value="1"/>
</dbReference>
<dbReference type="PROSITE" id="PS01031">
    <property type="entry name" value="SHSP"/>
    <property type="match status" value="1"/>
</dbReference>
<accession>Q96331</accession>
<accession>O23640</accession>
<accession>Q541V4</accession>
<accession>Q9SAN6</accession>
<reference key="1">
    <citation type="online journal article" date="1996" name="Plant Gene Register">
        <title>Nucleotide sequence of a cDNA encoding a mitochondrion-Localized small HSP from Arabidopsis thaliana: AtHsp23.6.</title>
        <authorList>
            <person name="Willett D.A."/>
            <person name="Basha E."/>
            <person name="Vierling E."/>
        </authorList>
        <locator>PGR96-117</locator>
    </citation>
    <scope>NUCLEOTIDE SEQUENCE [MRNA]</scope>
    <source>
        <strain>cv. Columbia</strain>
        <tissue>Leaf</tissue>
    </source>
</reference>
<reference key="2">
    <citation type="journal article" date="1997" name="Plant Mol. Biol.">
        <title>Differential display-mediated isolation of a genomic sequence for a putative mitochondrial LMW HSP specifically expressed in condition of induced thermotolerance in Arabidopsis thaliana (L.) heynh.</title>
        <authorList>
            <person name="Visioli G."/>
            <person name="Maestri E."/>
            <person name="Marmiroli N."/>
        </authorList>
    </citation>
    <scope>NUCLEOTIDE SEQUENCE [GENOMIC DNA / MRNA]</scope>
    <source>
        <strain>cv. Landsberg erecta</strain>
    </source>
</reference>
<reference key="3">
    <citation type="journal article" date="1999" name="Nature">
        <title>Sequence and analysis of chromosome 4 of the plant Arabidopsis thaliana.</title>
        <authorList>
            <person name="Mayer K.F.X."/>
            <person name="Schueller C."/>
            <person name="Wambutt R."/>
            <person name="Murphy G."/>
            <person name="Volckaert G."/>
            <person name="Pohl T."/>
            <person name="Duesterhoeft A."/>
            <person name="Stiekema W."/>
            <person name="Entian K.-D."/>
            <person name="Terryn N."/>
            <person name="Harris B."/>
            <person name="Ansorge W."/>
            <person name="Brandt P."/>
            <person name="Grivell L.A."/>
            <person name="Rieger M."/>
            <person name="Weichselgartner M."/>
            <person name="de Simone V."/>
            <person name="Obermaier B."/>
            <person name="Mache R."/>
            <person name="Mueller M."/>
            <person name="Kreis M."/>
            <person name="Delseny M."/>
            <person name="Puigdomenech P."/>
            <person name="Watson M."/>
            <person name="Schmidtheini T."/>
            <person name="Reichert B."/>
            <person name="Portetelle D."/>
            <person name="Perez-Alonso M."/>
            <person name="Boutry M."/>
            <person name="Bancroft I."/>
            <person name="Vos P."/>
            <person name="Hoheisel J."/>
            <person name="Zimmermann W."/>
            <person name="Wedler H."/>
            <person name="Ridley P."/>
            <person name="Langham S.-A."/>
            <person name="McCullagh B."/>
            <person name="Bilham L."/>
            <person name="Robben J."/>
            <person name="van der Schueren J."/>
            <person name="Grymonprez B."/>
            <person name="Chuang Y.-J."/>
            <person name="Vandenbussche F."/>
            <person name="Braeken M."/>
            <person name="Weltjens I."/>
            <person name="Voet M."/>
            <person name="Bastiaens I."/>
            <person name="Aert R."/>
            <person name="Defoor E."/>
            <person name="Weitzenegger T."/>
            <person name="Bothe G."/>
            <person name="Ramsperger U."/>
            <person name="Hilbert H."/>
            <person name="Braun M."/>
            <person name="Holzer E."/>
            <person name="Brandt A."/>
            <person name="Peters S."/>
            <person name="van Staveren M."/>
            <person name="Dirkse W."/>
            <person name="Mooijman P."/>
            <person name="Klein Lankhorst R."/>
            <person name="Rose M."/>
            <person name="Hauf J."/>
            <person name="Koetter P."/>
            <person name="Berneiser S."/>
            <person name="Hempel S."/>
            <person name="Feldpausch M."/>
            <person name="Lamberth S."/>
            <person name="Van den Daele H."/>
            <person name="De Keyser A."/>
            <person name="Buysshaert C."/>
            <person name="Gielen J."/>
            <person name="Villarroel R."/>
            <person name="De Clercq R."/>
            <person name="van Montagu M."/>
            <person name="Rogers J."/>
            <person name="Cronin A."/>
            <person name="Quail M.A."/>
            <person name="Bray-Allen S."/>
            <person name="Clark L."/>
            <person name="Doggett J."/>
            <person name="Hall S."/>
            <person name="Kay M."/>
            <person name="Lennard N."/>
            <person name="McLay K."/>
            <person name="Mayes R."/>
            <person name="Pettett A."/>
            <person name="Rajandream M.A."/>
            <person name="Lyne M."/>
            <person name="Benes V."/>
            <person name="Rechmann S."/>
            <person name="Borkova D."/>
            <person name="Bloecker H."/>
            <person name="Scharfe M."/>
            <person name="Grimm M."/>
            <person name="Loehnert T.-H."/>
            <person name="Dose S."/>
            <person name="de Haan M."/>
            <person name="Maarse A.C."/>
            <person name="Schaefer M."/>
            <person name="Mueller-Auer S."/>
            <person name="Gabel C."/>
            <person name="Fuchs M."/>
            <person name="Fartmann B."/>
            <person name="Granderath K."/>
            <person name="Dauner D."/>
            <person name="Herzl A."/>
            <person name="Neumann S."/>
            <person name="Argiriou A."/>
            <person name="Vitale D."/>
            <person name="Liguori R."/>
            <person name="Piravandi E."/>
            <person name="Massenet O."/>
            <person name="Quigley F."/>
            <person name="Clabauld G."/>
            <person name="Muendlein A."/>
            <person name="Felber R."/>
            <person name="Schnabl S."/>
            <person name="Hiller R."/>
            <person name="Schmidt W."/>
            <person name="Lecharny A."/>
            <person name="Aubourg S."/>
            <person name="Chefdor F."/>
            <person name="Cooke R."/>
            <person name="Berger C."/>
            <person name="Monfort A."/>
            <person name="Casacuberta E."/>
            <person name="Gibbons T."/>
            <person name="Weber N."/>
            <person name="Vandenbol M."/>
            <person name="Bargues M."/>
            <person name="Terol J."/>
            <person name="Torres A."/>
            <person name="Perez-Perez A."/>
            <person name="Purnelle B."/>
            <person name="Bent E."/>
            <person name="Johnson S."/>
            <person name="Tacon D."/>
            <person name="Jesse T."/>
            <person name="Heijnen L."/>
            <person name="Schwarz S."/>
            <person name="Scholler P."/>
            <person name="Heber S."/>
            <person name="Francs P."/>
            <person name="Bielke C."/>
            <person name="Frishman D."/>
            <person name="Haase D."/>
            <person name="Lemcke K."/>
            <person name="Mewes H.-W."/>
            <person name="Stocker S."/>
            <person name="Zaccaria P."/>
            <person name="Bevan M."/>
            <person name="Wilson R.K."/>
            <person name="de la Bastide M."/>
            <person name="Habermann K."/>
            <person name="Parnell L."/>
            <person name="Dedhia N."/>
            <person name="Gnoj L."/>
            <person name="Schutz K."/>
            <person name="Huang E."/>
            <person name="Spiegel L."/>
            <person name="Sekhon M."/>
            <person name="Murray J."/>
            <person name="Sheet P."/>
            <person name="Cordes M."/>
            <person name="Abu-Threideh J."/>
            <person name="Stoneking T."/>
            <person name="Kalicki J."/>
            <person name="Graves T."/>
            <person name="Harmon G."/>
            <person name="Edwards J."/>
            <person name="Latreille P."/>
            <person name="Courtney L."/>
            <person name="Cloud J."/>
            <person name="Abbott A."/>
            <person name="Scott K."/>
            <person name="Johnson D."/>
            <person name="Minx P."/>
            <person name="Bentley D."/>
            <person name="Fulton B."/>
            <person name="Miller N."/>
            <person name="Greco T."/>
            <person name="Kemp K."/>
            <person name="Kramer J."/>
            <person name="Fulton L."/>
            <person name="Mardis E."/>
            <person name="Dante M."/>
            <person name="Pepin K."/>
            <person name="Hillier L.W."/>
            <person name="Nelson J."/>
            <person name="Spieth J."/>
            <person name="Ryan E."/>
            <person name="Andrews S."/>
            <person name="Geisel C."/>
            <person name="Layman D."/>
            <person name="Du H."/>
            <person name="Ali J."/>
            <person name="Berghoff A."/>
            <person name="Jones K."/>
            <person name="Drone K."/>
            <person name="Cotton M."/>
            <person name="Joshu C."/>
            <person name="Antonoiu B."/>
            <person name="Zidanic M."/>
            <person name="Strong C."/>
            <person name="Sun H."/>
            <person name="Lamar B."/>
            <person name="Yordan C."/>
            <person name="Ma P."/>
            <person name="Zhong J."/>
            <person name="Preston R."/>
            <person name="Vil D."/>
            <person name="Shekher M."/>
            <person name="Matero A."/>
            <person name="Shah R."/>
            <person name="Swaby I.K."/>
            <person name="O'Shaughnessy A."/>
            <person name="Rodriguez M."/>
            <person name="Hoffman J."/>
            <person name="Till S."/>
            <person name="Granat S."/>
            <person name="Shohdy N."/>
            <person name="Hasegawa A."/>
            <person name="Hameed A."/>
            <person name="Lodhi M."/>
            <person name="Johnson A."/>
            <person name="Chen E."/>
            <person name="Marra M.A."/>
            <person name="Martienssen R."/>
            <person name="McCombie W.R."/>
        </authorList>
    </citation>
    <scope>NUCLEOTIDE SEQUENCE [LARGE SCALE GENOMIC DNA]</scope>
    <source>
        <strain>cv. Columbia</strain>
    </source>
</reference>
<reference key="4">
    <citation type="journal article" date="2017" name="Plant J.">
        <title>Araport11: a complete reannotation of the Arabidopsis thaliana reference genome.</title>
        <authorList>
            <person name="Cheng C.Y."/>
            <person name="Krishnakumar V."/>
            <person name="Chan A.P."/>
            <person name="Thibaud-Nissen F."/>
            <person name="Schobel S."/>
            <person name="Town C.D."/>
        </authorList>
    </citation>
    <scope>GENOME REANNOTATION</scope>
    <source>
        <strain>cv. Columbia</strain>
    </source>
</reference>
<reference key="5">
    <citation type="journal article" date="2002" name="Science">
        <title>Functional annotation of a full-length Arabidopsis cDNA collection.</title>
        <authorList>
            <person name="Seki M."/>
            <person name="Narusaka M."/>
            <person name="Kamiya A."/>
            <person name="Ishida J."/>
            <person name="Satou M."/>
            <person name="Sakurai T."/>
            <person name="Nakajima M."/>
            <person name="Enju A."/>
            <person name="Akiyama K."/>
            <person name="Oono Y."/>
            <person name="Muramatsu M."/>
            <person name="Hayashizaki Y."/>
            <person name="Kawai J."/>
            <person name="Carninci P."/>
            <person name="Itoh M."/>
            <person name="Ishii Y."/>
            <person name="Arakawa T."/>
            <person name="Shibata K."/>
            <person name="Shinagawa A."/>
            <person name="Shinozaki K."/>
        </authorList>
    </citation>
    <scope>NUCLEOTIDE SEQUENCE [LARGE SCALE MRNA]</scope>
    <source>
        <strain>cv. Columbia</strain>
    </source>
</reference>
<reference key="6">
    <citation type="journal article" date="2003" name="Science">
        <title>Empirical analysis of transcriptional activity in the Arabidopsis genome.</title>
        <authorList>
            <person name="Yamada K."/>
            <person name="Lim J."/>
            <person name="Dale J.M."/>
            <person name="Chen H."/>
            <person name="Shinn P."/>
            <person name="Palm C.J."/>
            <person name="Southwick A.M."/>
            <person name="Wu H.C."/>
            <person name="Kim C.J."/>
            <person name="Nguyen M."/>
            <person name="Pham P.K."/>
            <person name="Cheuk R.F."/>
            <person name="Karlin-Newmann G."/>
            <person name="Liu S.X."/>
            <person name="Lam B."/>
            <person name="Sakano H."/>
            <person name="Wu T."/>
            <person name="Yu G."/>
            <person name="Miranda M."/>
            <person name="Quach H.L."/>
            <person name="Tripp M."/>
            <person name="Chang C.H."/>
            <person name="Lee J.M."/>
            <person name="Toriumi M.J."/>
            <person name="Chan M.M."/>
            <person name="Tang C.C."/>
            <person name="Onodera C.S."/>
            <person name="Deng J.M."/>
            <person name="Akiyama K."/>
            <person name="Ansari Y."/>
            <person name="Arakawa T."/>
            <person name="Banh J."/>
            <person name="Banno F."/>
            <person name="Bowser L."/>
            <person name="Brooks S.Y."/>
            <person name="Carninci P."/>
            <person name="Chao Q."/>
            <person name="Choy N."/>
            <person name="Enju A."/>
            <person name="Goldsmith A.D."/>
            <person name="Gurjal M."/>
            <person name="Hansen N.F."/>
            <person name="Hayashizaki Y."/>
            <person name="Johnson-Hopson C."/>
            <person name="Hsuan V.W."/>
            <person name="Iida K."/>
            <person name="Karnes M."/>
            <person name="Khan S."/>
            <person name="Koesema E."/>
            <person name="Ishida J."/>
            <person name="Jiang P.X."/>
            <person name="Jones T."/>
            <person name="Kawai J."/>
            <person name="Kamiya A."/>
            <person name="Meyers C."/>
            <person name="Nakajima M."/>
            <person name="Narusaka M."/>
            <person name="Seki M."/>
            <person name="Sakurai T."/>
            <person name="Satou M."/>
            <person name="Tamse R."/>
            <person name="Vaysberg M."/>
            <person name="Wallender E.K."/>
            <person name="Wong C."/>
            <person name="Yamamura Y."/>
            <person name="Yuan S."/>
            <person name="Shinozaki K."/>
            <person name="Davis R.W."/>
            <person name="Theologis A."/>
            <person name="Ecker J.R."/>
        </authorList>
    </citation>
    <scope>NUCLEOTIDE SEQUENCE [LARGE SCALE MRNA]</scope>
    <source>
        <strain>cv. Columbia</strain>
    </source>
</reference>
<reference key="7">
    <citation type="journal article" date="2009" name="DNA Res.">
        <title>Analysis of multiple occurrences of alternative splicing events in Arabidopsis thaliana using novel sequenced full-length cDNAs.</title>
        <authorList>
            <person name="Iida K."/>
            <person name="Fukami-Kobayashi K."/>
            <person name="Toyoda A."/>
            <person name="Sakaki Y."/>
            <person name="Kobayashi M."/>
            <person name="Seki M."/>
            <person name="Shinozaki K."/>
        </authorList>
    </citation>
    <scope>NUCLEOTIDE SEQUENCE [LARGE SCALE MRNA]</scope>
    <source>
        <strain>cv. Columbia</strain>
    </source>
</reference>
<organism>
    <name type="scientific">Arabidopsis thaliana</name>
    <name type="common">Mouse-ear cress</name>
    <dbReference type="NCBI Taxonomy" id="3702"/>
    <lineage>
        <taxon>Eukaryota</taxon>
        <taxon>Viridiplantae</taxon>
        <taxon>Streptophyta</taxon>
        <taxon>Embryophyta</taxon>
        <taxon>Tracheophyta</taxon>
        <taxon>Spermatophyta</taxon>
        <taxon>Magnoliopsida</taxon>
        <taxon>eudicotyledons</taxon>
        <taxon>Gunneridae</taxon>
        <taxon>Pentapetalae</taxon>
        <taxon>rosids</taxon>
        <taxon>malvids</taxon>
        <taxon>Brassicales</taxon>
        <taxon>Brassicaceae</taxon>
        <taxon>Camelineae</taxon>
        <taxon>Arabidopsis</taxon>
    </lineage>
</organism>
<feature type="transit peptide" description="Mitochondrion" evidence="1">
    <location>
        <begin position="1"/>
        <end position="31"/>
    </location>
</feature>
<feature type="chain" id="PRO_0000013529" description="23.6 kDa heat shock protein, mitochondrial">
    <location>
        <begin position="32"/>
        <end position="210"/>
    </location>
</feature>
<feature type="domain" description="sHSP" evidence="2">
    <location>
        <begin position="100"/>
        <end position="210"/>
    </location>
</feature>
<feature type="region of interest" description="Disordered" evidence="3">
    <location>
        <begin position="145"/>
        <end position="165"/>
    </location>
</feature>
<feature type="sequence conflict" description="In Ref. 2; CAA67022/CAA72613." evidence="4" ref="2">
    <original>I</original>
    <variation>L</variation>
    <location>
        <position position="143"/>
    </location>
</feature>
<feature type="sequence conflict" description="In Ref. 2; CAA67022/CAA72613." evidence="4" ref="2">
    <original>E</original>
    <variation>Q</variation>
    <location>
        <position position="156"/>
    </location>
</feature>
<comment type="subunit">
    <text>May form oligomeric structures.</text>
</comment>
<comment type="subcellular location">
    <subcellularLocation>
        <location evidence="4">Mitochondrion</location>
    </subcellularLocation>
</comment>
<comment type="similarity">
    <text evidence="2">Belongs to the small heat shock protein (HSP20) family.</text>
</comment>
<protein>
    <recommendedName>
        <fullName>23.6 kDa heat shock protein, mitochondrial</fullName>
        <shortName>AtHsp23.6</shortName>
    </recommendedName>
</protein>
<name>HS23M_ARATH</name>
<sequence>MASALALKRLLSSSIAPRSRSVLRPAVSSRLFNTNAVRSYDDDGENGDGVDLYRRSVPRRRGDFFSDVFDPFSPTRSVSQVLNLMDQFMENPLLSATRGMGASGARRGWDIKEKDDALYLRIDMPGLSREDVKLALEQDTLVIRGEGKNEEDGGEEGESGNRRFTSRIGLPDKIYKIDEIKAEMKNGVLKVVIPKMKEQERNDVRQIEIN</sequence>